<protein>
    <recommendedName>
        <fullName evidence="1">UvrABC system protein B</fullName>
        <shortName evidence="1">Protein UvrB</shortName>
    </recommendedName>
    <alternativeName>
        <fullName evidence="1">Excinuclease ABC subunit B</fullName>
    </alternativeName>
</protein>
<gene>
    <name evidence="1" type="primary">uvrB</name>
    <name type="ordered locus">PAM_763</name>
</gene>
<keyword id="KW-0067">ATP-binding</keyword>
<keyword id="KW-0963">Cytoplasm</keyword>
<keyword id="KW-0227">DNA damage</keyword>
<keyword id="KW-0228">DNA excision</keyword>
<keyword id="KW-0234">DNA repair</keyword>
<keyword id="KW-0267">Excision nuclease</keyword>
<keyword id="KW-0547">Nucleotide-binding</keyword>
<keyword id="KW-0742">SOS response</keyword>
<dbReference type="EMBL" id="AP006628">
    <property type="protein sequence ID" value="BAF95573.1"/>
    <property type="molecule type" value="Genomic_DNA"/>
</dbReference>
<dbReference type="SMR" id="Q6YQE1"/>
<dbReference type="STRING" id="262768.PAM_763"/>
<dbReference type="KEGG" id="poy:PAM_763"/>
<dbReference type="eggNOG" id="COG0556">
    <property type="taxonomic scope" value="Bacteria"/>
</dbReference>
<dbReference type="HOGENOM" id="CLU_009621_2_1_14"/>
<dbReference type="BioCyc" id="OYEL262768:G1G26-513-MONOMER"/>
<dbReference type="Proteomes" id="UP000002523">
    <property type="component" value="Chromosome"/>
</dbReference>
<dbReference type="GO" id="GO:0005737">
    <property type="term" value="C:cytoplasm"/>
    <property type="evidence" value="ECO:0007669"/>
    <property type="project" value="UniProtKB-SubCell"/>
</dbReference>
<dbReference type="GO" id="GO:0009380">
    <property type="term" value="C:excinuclease repair complex"/>
    <property type="evidence" value="ECO:0007669"/>
    <property type="project" value="InterPro"/>
</dbReference>
<dbReference type="GO" id="GO:0005524">
    <property type="term" value="F:ATP binding"/>
    <property type="evidence" value="ECO:0007669"/>
    <property type="project" value="UniProtKB-UniRule"/>
</dbReference>
<dbReference type="GO" id="GO:0016887">
    <property type="term" value="F:ATP hydrolysis activity"/>
    <property type="evidence" value="ECO:0007669"/>
    <property type="project" value="InterPro"/>
</dbReference>
<dbReference type="GO" id="GO:0003677">
    <property type="term" value="F:DNA binding"/>
    <property type="evidence" value="ECO:0007669"/>
    <property type="project" value="UniProtKB-UniRule"/>
</dbReference>
<dbReference type="GO" id="GO:0009381">
    <property type="term" value="F:excinuclease ABC activity"/>
    <property type="evidence" value="ECO:0007669"/>
    <property type="project" value="UniProtKB-UniRule"/>
</dbReference>
<dbReference type="GO" id="GO:0006289">
    <property type="term" value="P:nucleotide-excision repair"/>
    <property type="evidence" value="ECO:0007669"/>
    <property type="project" value="UniProtKB-UniRule"/>
</dbReference>
<dbReference type="GO" id="GO:0009432">
    <property type="term" value="P:SOS response"/>
    <property type="evidence" value="ECO:0007669"/>
    <property type="project" value="UniProtKB-UniRule"/>
</dbReference>
<dbReference type="CDD" id="cd17916">
    <property type="entry name" value="DEXHc_UvrB"/>
    <property type="match status" value="1"/>
</dbReference>
<dbReference type="CDD" id="cd18790">
    <property type="entry name" value="SF2_C_UvrB"/>
    <property type="match status" value="1"/>
</dbReference>
<dbReference type="Gene3D" id="3.40.50.300">
    <property type="entry name" value="P-loop containing nucleotide triphosphate hydrolases"/>
    <property type="match status" value="3"/>
</dbReference>
<dbReference type="Gene3D" id="4.10.860.10">
    <property type="entry name" value="UVR domain"/>
    <property type="match status" value="1"/>
</dbReference>
<dbReference type="HAMAP" id="MF_00204">
    <property type="entry name" value="UvrB"/>
    <property type="match status" value="1"/>
</dbReference>
<dbReference type="InterPro" id="IPR006935">
    <property type="entry name" value="Helicase/UvrB_N"/>
</dbReference>
<dbReference type="InterPro" id="IPR014001">
    <property type="entry name" value="Helicase_ATP-bd"/>
</dbReference>
<dbReference type="InterPro" id="IPR001650">
    <property type="entry name" value="Helicase_C-like"/>
</dbReference>
<dbReference type="InterPro" id="IPR027417">
    <property type="entry name" value="P-loop_NTPase"/>
</dbReference>
<dbReference type="InterPro" id="IPR001943">
    <property type="entry name" value="UVR_dom"/>
</dbReference>
<dbReference type="InterPro" id="IPR036876">
    <property type="entry name" value="UVR_dom_sf"/>
</dbReference>
<dbReference type="InterPro" id="IPR004807">
    <property type="entry name" value="UvrB"/>
</dbReference>
<dbReference type="InterPro" id="IPR041471">
    <property type="entry name" value="UvrB_inter"/>
</dbReference>
<dbReference type="InterPro" id="IPR024759">
    <property type="entry name" value="UvrB_YAD/RRR_dom"/>
</dbReference>
<dbReference type="NCBIfam" id="NF003673">
    <property type="entry name" value="PRK05298.1"/>
    <property type="match status" value="1"/>
</dbReference>
<dbReference type="NCBIfam" id="TIGR00631">
    <property type="entry name" value="uvrb"/>
    <property type="match status" value="1"/>
</dbReference>
<dbReference type="PANTHER" id="PTHR24029">
    <property type="entry name" value="UVRABC SYSTEM PROTEIN B"/>
    <property type="match status" value="1"/>
</dbReference>
<dbReference type="PANTHER" id="PTHR24029:SF0">
    <property type="entry name" value="UVRABC SYSTEM PROTEIN B"/>
    <property type="match status" value="1"/>
</dbReference>
<dbReference type="Pfam" id="PF00271">
    <property type="entry name" value="Helicase_C"/>
    <property type="match status" value="1"/>
</dbReference>
<dbReference type="Pfam" id="PF04851">
    <property type="entry name" value="ResIII"/>
    <property type="match status" value="1"/>
</dbReference>
<dbReference type="Pfam" id="PF02151">
    <property type="entry name" value="UVR"/>
    <property type="match status" value="1"/>
</dbReference>
<dbReference type="Pfam" id="PF12344">
    <property type="entry name" value="UvrB"/>
    <property type="match status" value="1"/>
</dbReference>
<dbReference type="Pfam" id="PF17757">
    <property type="entry name" value="UvrB_inter"/>
    <property type="match status" value="1"/>
</dbReference>
<dbReference type="SMART" id="SM00487">
    <property type="entry name" value="DEXDc"/>
    <property type="match status" value="1"/>
</dbReference>
<dbReference type="SMART" id="SM00490">
    <property type="entry name" value="HELICc"/>
    <property type="match status" value="1"/>
</dbReference>
<dbReference type="SUPFAM" id="SSF46600">
    <property type="entry name" value="C-terminal UvrC-binding domain of UvrB"/>
    <property type="match status" value="1"/>
</dbReference>
<dbReference type="SUPFAM" id="SSF52540">
    <property type="entry name" value="P-loop containing nucleoside triphosphate hydrolases"/>
    <property type="match status" value="2"/>
</dbReference>
<dbReference type="PROSITE" id="PS51192">
    <property type="entry name" value="HELICASE_ATP_BIND_1"/>
    <property type="match status" value="1"/>
</dbReference>
<dbReference type="PROSITE" id="PS51194">
    <property type="entry name" value="HELICASE_CTER"/>
    <property type="match status" value="1"/>
</dbReference>
<dbReference type="PROSITE" id="PS50151">
    <property type="entry name" value="UVR"/>
    <property type="match status" value="1"/>
</dbReference>
<proteinExistence type="inferred from homology"/>
<reference key="1">
    <citation type="journal article" date="2004" name="Nat. Genet.">
        <title>Reductive evolution suggested from the complete genome sequence of a plant-pathogenic phytoplasma.</title>
        <authorList>
            <person name="Oshima K."/>
            <person name="Kakizawa S."/>
            <person name="Nishigawa H."/>
            <person name="Jung H.-Y."/>
            <person name="Wei W."/>
            <person name="Suzuki S."/>
            <person name="Arashida R."/>
            <person name="Nakata D."/>
            <person name="Miyata S."/>
            <person name="Ugaki M."/>
            <person name="Namba S."/>
        </authorList>
    </citation>
    <scope>NUCLEOTIDE SEQUENCE [LARGE SCALE GENOMIC DNA]</scope>
    <source>
        <strain>OY-M</strain>
    </source>
</reference>
<reference key="2">
    <citation type="submission" date="2007-12" db="EMBL/GenBank/DDBJ databases">
        <authorList>
            <person name="Oshima K."/>
            <person name="Kakizawa S."/>
            <person name="Nishigawa H."/>
            <person name="Ugaki M."/>
            <person name="Namba S."/>
        </authorList>
    </citation>
    <scope>SEQUENCE REVISION</scope>
</reference>
<name>UVRB_ONYPE</name>
<accession>Q6YQE1</accession>
<accession>A9JQS9</accession>
<organism>
    <name type="scientific">Onion yellows phytoplasma (strain OY-M)</name>
    <dbReference type="NCBI Taxonomy" id="262768"/>
    <lineage>
        <taxon>Bacteria</taxon>
        <taxon>Bacillati</taxon>
        <taxon>Mycoplasmatota</taxon>
        <taxon>Mollicutes</taxon>
        <taxon>Acholeplasmatales</taxon>
        <taxon>Acholeplasmataceae</taxon>
        <taxon>Candidatus Phytoplasma</taxon>
        <taxon>16SrI (Aster yellows group)</taxon>
    </lineage>
</organism>
<feature type="chain" id="PRO_0000227336" description="UvrABC system protein B">
    <location>
        <begin position="1"/>
        <end position="670"/>
    </location>
</feature>
<feature type="domain" description="Helicase ATP-binding" evidence="1">
    <location>
        <begin position="28"/>
        <end position="414"/>
    </location>
</feature>
<feature type="domain" description="Helicase C-terminal" evidence="1">
    <location>
        <begin position="432"/>
        <end position="594"/>
    </location>
</feature>
<feature type="domain" description="UVR" evidence="1">
    <location>
        <begin position="631"/>
        <end position="666"/>
    </location>
</feature>
<feature type="short sequence motif" description="Beta-hairpin">
    <location>
        <begin position="94"/>
        <end position="117"/>
    </location>
</feature>
<feature type="binding site" evidence="1">
    <location>
        <begin position="41"/>
        <end position="48"/>
    </location>
    <ligand>
        <name>ATP</name>
        <dbReference type="ChEBI" id="CHEBI:30616"/>
    </ligand>
</feature>
<evidence type="ECO:0000255" key="1">
    <source>
        <dbReference type="HAMAP-Rule" id="MF_00204"/>
    </source>
</evidence>
<comment type="function">
    <text evidence="1">The UvrABC repair system catalyzes the recognition and processing of DNA lesions. A damage recognition complex composed of 2 UvrA and 2 UvrB subunits scans DNA for abnormalities. Upon binding of the UvrA(2)B(2) complex to a putative damaged site, the DNA wraps around one UvrB monomer. DNA wrap is dependent on ATP binding by UvrB and probably causes local melting of the DNA helix, facilitating insertion of UvrB beta-hairpin between the DNA strands. Then UvrB probes one DNA strand for the presence of a lesion. If a lesion is found the UvrA subunits dissociate and the UvrB-DNA preincision complex is formed. This complex is subsequently bound by UvrC and the second UvrB is released. If no lesion is found, the DNA wraps around the other UvrB subunit that will check the other stand for damage.</text>
</comment>
<comment type="subunit">
    <text evidence="1">Forms a heterotetramer with UvrA during the search for lesions. Interacts with UvrC in an incision complex.</text>
</comment>
<comment type="subcellular location">
    <subcellularLocation>
        <location evidence="1">Cytoplasm</location>
    </subcellularLocation>
</comment>
<comment type="domain">
    <text evidence="1">The beta-hairpin motif is involved in DNA binding.</text>
</comment>
<comment type="similarity">
    <text evidence="1">Belongs to the UvrB family.</text>
</comment>
<sequence length="670" mass="76697">MSLTNLFKLQSSLKPSGDQPQAIQKLVNNFKQGLQEQILLGATGTGKTFTIANIIQHLQQKTLVIAHNKTLAGQLYNELKAMFPNNRVEYFISYYDYYQPEAYVASSDTYIEKDSKINDEIDQLRHSAAGSLLNRDDVIVVASVSCIYGVGDLKDYQKSTLHLQIGDKYERQALINKLIELKYQRNEINFQRGTFRVRGDIIEIIASSSKEIGIRIIFFGNEIENIQNFDVLNGKAITNLKLITLFPASLYATNTQKLQEGIKRIRQELKEQINHFEKTNQLLAAQKIKMRTLHDLEMLEQIGNCNGVENYSRHLALKEKGEAPSTLIDFFGNEFLTIIDESHVTIPQIKGMYFGDFSRKTNLVNFGFRLPSALDNRPLKFHEFQAKMNKVIYLSATPGNYELTKKIPIVEQIIRPTFVLDPEIEIRPTHNQMDDLYFEIKHQTKNNQRILITTLTINMSEDLTAYLKNLCIKVAYLHSEIKSLQRLEILKDLRLGKYDCLVGVNLLREGLDLPEVALVAILDADKQGFLRNERSLIQTIGRAARNITGKAIMYADCISPAMQIAIEETYRRRKIQQQYNETMKVTPTALNKTILETISIKQKESAQNENENGKVKGQKKLQTHTNITAKNKEIKRLQKMMKEAAKTLDFEKAATLRDLILELEKKGKLK</sequence>